<accession>Q9Y5V3</accession>
<accession>Q5VSH6</accession>
<accession>Q8IZ84</accession>
<accession>Q8WY92</accession>
<accession>Q9H352</accession>
<accession>Q9HBT4</accession>
<accession>Q9UF36</accession>
<evidence type="ECO:0000250" key="1"/>
<evidence type="ECO:0000255" key="2">
    <source>
        <dbReference type="PROSITE-ProRule" id="PRU00127"/>
    </source>
</evidence>
<evidence type="ECO:0000256" key="3">
    <source>
        <dbReference type="SAM" id="MobiDB-lite"/>
    </source>
</evidence>
<evidence type="ECO:0000269" key="4">
    <source>
    </source>
</evidence>
<evidence type="ECO:0000303" key="5">
    <source>
    </source>
</evidence>
<evidence type="ECO:0000305" key="6"/>
<evidence type="ECO:0007744" key="7">
    <source>
    </source>
</evidence>
<comment type="function">
    <text evidence="4">Involved in the apoptotic response after nerve growth factor (NGF) binding in neuronal cells. Inhibits cell cycle progression, and facilitates NGFR-mediated apoptosis. May act as a regulator of the function of DLX family members. May enhance ubiquitin ligase activity of RING-type zinc finger-containing E3 ubiquitin-protein ligases. Proposed to act through recruitment and/or stabilization of the Ubl-conjugating enzyme (E2) at the E3:substrate complex. Plays a role in the circadian rhythm regulation. May act as RORA co-regulator, modulating the expression of core clock genes such as BMAL1 and NFIL3, induced, or NR1D1, repressed.</text>
</comment>
<comment type="subunit">
    <text evidence="4">Interacts with DLX5, DLX7 and MSX2 and forms homomultimers. Interacts with UNC5A. Interacts with TRIM28 and PJA1. Interacts with NGFR/p75NTR and RORA.</text>
</comment>
<comment type="interaction">
    <interactant intactId="EBI-716006">
        <id>Q9Y5V3</id>
    </interactant>
    <interactant intactId="EBI-17740588">
        <id>O00468-6</id>
        <label>AGRN</label>
    </interactant>
    <organismsDiffer>false</organismsDiffer>
    <experiments>3</experiments>
</comment>
<comment type="interaction">
    <interactant intactId="EBI-716006">
        <id>Q9Y5V3</id>
    </interactant>
    <interactant intactId="EBI-9641546">
        <id>Q99996-2</id>
        <label>AKAP9</label>
    </interactant>
    <organismsDiffer>false</organismsDiffer>
    <experiments>3</experiments>
</comment>
<comment type="interaction">
    <interactant intactId="EBI-716006">
        <id>Q9Y5V3</id>
    </interactant>
    <interactant intactId="EBI-1057448">
        <id>Q5VV41</id>
        <label>ARHGEF16</label>
    </interactant>
    <organismsDiffer>false</organismsDiffer>
    <experiments>3</experiments>
</comment>
<comment type="interaction">
    <interactant intactId="EBI-716006">
        <id>Q9Y5V3</id>
    </interactant>
    <interactant intactId="EBI-948603">
        <id>Q03989</id>
        <label>ARID5A</label>
    </interactant>
    <organismsDiffer>false</organismsDiffer>
    <experiments>3</experiments>
</comment>
<comment type="interaction">
    <interactant intactId="EBI-716006">
        <id>Q9Y5V3</id>
    </interactant>
    <interactant intactId="EBI-747185">
        <id>O95817</id>
        <label>BAG3</label>
    </interactant>
    <organismsDiffer>false</organismsDiffer>
    <experiments>6</experiments>
</comment>
<comment type="interaction">
    <interactant intactId="EBI-716006">
        <id>Q9Y5V3</id>
    </interactant>
    <interactant intactId="EBI-2949658">
        <id>O95429</id>
        <label>BAG4</label>
    </interactant>
    <organismsDiffer>false</organismsDiffer>
    <experiments>3</experiments>
</comment>
<comment type="interaction">
    <interactant intactId="EBI-716006">
        <id>Q9Y5V3</id>
    </interactant>
    <interactant intactId="EBI-711810">
        <id>O14503</id>
        <label>BHLHE40</label>
    </interactant>
    <organismsDiffer>false</organismsDiffer>
    <experiments>6</experiments>
</comment>
<comment type="interaction">
    <interactant intactId="EBI-716006">
        <id>Q9Y5V3</id>
    </interactant>
    <interactant intactId="EBI-2129837">
        <id>Q6PIA0</id>
        <label>BIRC8</label>
    </interactant>
    <organismsDiffer>false</organismsDiffer>
    <experiments>3</experiments>
</comment>
<comment type="interaction">
    <interactant intactId="EBI-716006">
        <id>Q9Y5V3</id>
    </interactant>
    <interactant intactId="EBI-946029">
        <id>Q6P1W5</id>
        <label>C1orf94</label>
    </interactant>
    <organismsDiffer>false</organismsDiffer>
    <experiments>3</experiments>
</comment>
<comment type="interaction">
    <interactant intactId="EBI-716006">
        <id>Q9Y5V3</id>
    </interactant>
    <interactant intactId="EBI-718700">
        <id>P35219</id>
        <label>CA8</label>
    </interactant>
    <organismsDiffer>false</organismsDiffer>
    <experiments>9</experiments>
</comment>
<comment type="interaction">
    <interactant intactId="EBI-716006">
        <id>Q9Y5V3</id>
    </interactant>
    <interactant intactId="EBI-1765641">
        <id>Q9Y6W3</id>
        <label>CAPN7</label>
    </interactant>
    <organismsDiffer>false</organismsDiffer>
    <experiments>3</experiments>
</comment>
<comment type="interaction">
    <interactant intactId="EBI-716006">
        <id>Q9Y5V3</id>
    </interactant>
    <interactant intactId="EBI-744556">
        <id>Q96HB5</id>
        <label>CCDC120</label>
    </interactant>
    <organismsDiffer>false</organismsDiffer>
    <experiments>3</experiments>
</comment>
<comment type="interaction">
    <interactant intactId="EBI-716006">
        <id>Q9Y5V3</id>
    </interactant>
    <interactant intactId="EBI-768015">
        <id>O95400</id>
        <label>CD2BP2</label>
    </interactant>
    <organismsDiffer>false</organismsDiffer>
    <experiments>3</experiments>
</comment>
<comment type="interaction">
    <interactant intactId="EBI-716006">
        <id>Q9Y5V3</id>
    </interactant>
    <interactant intactId="EBI-396137">
        <id>Q9UJX2</id>
        <label>CDC23</label>
    </interactant>
    <organismsDiffer>false</organismsDiffer>
    <experiments>3</experiments>
</comment>
<comment type="interaction">
    <interactant intactId="EBI-716006">
        <id>Q9Y5V3</id>
    </interactant>
    <interactant intactId="EBI-12261896">
        <id>Q5T4B2</id>
        <label>CERCAM</label>
    </interactant>
    <organismsDiffer>false</organismsDiffer>
    <experiments>3</experiments>
</comment>
<comment type="interaction">
    <interactant intactId="EBI-716006">
        <id>Q9Y5V3</id>
    </interactant>
    <interactant intactId="EBI-749051">
        <id>Q8IYR0</id>
        <label>CFAP206</label>
    </interactant>
    <organismsDiffer>false</organismsDiffer>
    <experiments>3</experiments>
</comment>
<comment type="interaction">
    <interactant intactId="EBI-716006">
        <id>Q9Y5V3</id>
    </interactant>
    <interactant intactId="EBI-2555370">
        <id>Q8IWX8</id>
        <label>CHERP</label>
    </interactant>
    <organismsDiffer>false</organismsDiffer>
    <experiments>3</experiments>
</comment>
<comment type="interaction">
    <interactant intactId="EBI-716006">
        <id>Q9Y5V3</id>
    </interactant>
    <interactant intactId="EBI-7875264">
        <id>O75553</id>
        <label>DAB1</label>
    </interactant>
    <organismsDiffer>false</organismsDiffer>
    <experiments>3</experiments>
</comment>
<comment type="interaction">
    <interactant intactId="EBI-716006">
        <id>Q9Y5V3</id>
    </interactant>
    <interactant intactId="EBI-724310">
        <id>Q15038</id>
        <label>DAZAP2</label>
    </interactant>
    <organismsDiffer>false</organismsDiffer>
    <experiments>4</experiments>
</comment>
<comment type="interaction">
    <interactant intactId="EBI-716006">
        <id>Q9Y5V3</id>
    </interactant>
    <interactant intactId="EBI-351257">
        <id>P26196</id>
        <label>DDX6</label>
    </interactant>
    <organismsDiffer>false</organismsDiffer>
    <experiments>3</experiments>
</comment>
<comment type="interaction">
    <interactant intactId="EBI-716006">
        <id>Q9Y5V3</id>
    </interactant>
    <interactant intactId="EBI-18072054">
        <id>Q9Y5R5</id>
        <label>DMRT2</label>
    </interactant>
    <organismsDiffer>false</organismsDiffer>
    <experiments>3</experiments>
</comment>
<comment type="interaction">
    <interactant intactId="EBI-716006">
        <id>Q9Y5V3</id>
    </interactant>
    <interactant intactId="EBI-398610">
        <id>O60573</id>
        <label>EIF4E2</label>
    </interactant>
    <organismsDiffer>false</organismsDiffer>
    <experiments>3</experiments>
</comment>
<comment type="interaction">
    <interactant intactId="EBI-716006">
        <id>Q9Y5V3</id>
    </interactant>
    <interactant intactId="EBI-1183307">
        <id>P19447</id>
        <label>ERCC3</label>
    </interactant>
    <organismsDiffer>false</organismsDiffer>
    <experiments>3</experiments>
</comment>
<comment type="interaction">
    <interactant intactId="EBI-716006">
        <id>Q9Y5V3</id>
    </interactant>
    <interactant intactId="EBI-1384254">
        <id>Q86UY5</id>
        <label>FAM83A</label>
    </interactant>
    <organismsDiffer>false</organismsDiffer>
    <experiments>3</experiments>
</comment>
<comment type="interaction">
    <interactant intactId="EBI-716006">
        <id>Q9Y5V3</id>
    </interactant>
    <interactant intactId="EBI-17282008">
        <id>O60548</id>
        <label>FOXD2</label>
    </interactant>
    <organismsDiffer>false</organismsDiffer>
    <experiments>3</experiments>
</comment>
<comment type="interaction">
    <interactant intactId="EBI-716006">
        <id>Q9Y5V3</id>
    </interactant>
    <interactant intactId="EBI-1759806">
        <id>O75593</id>
        <label>FOXH1</label>
    </interactant>
    <organismsDiffer>false</organismsDiffer>
    <experiments>3</experiments>
</comment>
<comment type="interaction">
    <interactant intactId="EBI-716006">
        <id>Q9Y5V3</id>
    </interactant>
    <interactant intactId="EBI-12018822">
        <id>Q12951-2</id>
        <label>FOXI1</label>
    </interactant>
    <organismsDiffer>false</organismsDiffer>
    <experiments>3</experiments>
</comment>
<comment type="interaction">
    <interactant intactId="EBI-716006">
        <id>Q9Y5V3</id>
    </interactant>
    <interactant intactId="EBI-12132270">
        <id>Q9BWX5</id>
        <label>GATA5</label>
    </interactant>
    <organismsDiffer>false</organismsDiffer>
    <experiments>3</experiments>
</comment>
<comment type="interaction">
    <interactant intactId="EBI-716006">
        <id>Q9Y5V3</id>
    </interactant>
    <interactant intactId="EBI-12020340">
        <id>P23415</id>
        <label>GLRA1</label>
    </interactant>
    <organismsDiffer>false</organismsDiffer>
    <experiments>3</experiments>
</comment>
<comment type="interaction">
    <interactant intactId="EBI-716006">
        <id>Q9Y5V3</id>
    </interactant>
    <interactant intactId="EBI-748515">
        <id>Q8IVS8</id>
        <label>GLYCTK</label>
    </interactant>
    <organismsDiffer>false</organismsDiffer>
    <experiments>3</experiments>
</comment>
<comment type="interaction">
    <interactant intactId="EBI-716006">
        <id>Q9Y5V3</id>
    </interactant>
    <interactant intactId="EBI-751540">
        <id>O95872</id>
        <label>GPANK1</label>
    </interactant>
    <organismsDiffer>false</organismsDiffer>
    <experiments>3</experiments>
</comment>
<comment type="interaction">
    <interactant intactId="EBI-716006">
        <id>Q9Y5V3</id>
    </interactant>
    <interactant intactId="EBI-10329202">
        <id>Q9Y5R4</id>
        <label>HEMK1</label>
    </interactant>
    <organismsDiffer>false</organismsDiffer>
    <experiments>3</experiments>
</comment>
<comment type="interaction">
    <interactant intactId="EBI-716006">
        <id>Q9Y5V3</id>
    </interactant>
    <interactant intactId="EBI-16429135">
        <id>A0A0S2Z4Q4</id>
        <label>HGS</label>
    </interactant>
    <organismsDiffer>false</organismsDiffer>
    <experiments>3</experiments>
</comment>
<comment type="interaction">
    <interactant intactId="EBI-716006">
        <id>Q9Y5V3</id>
    </interactant>
    <interactant intactId="EBI-740220">
        <id>O14964</id>
        <label>HGS</label>
    </interactant>
    <organismsDiffer>false</organismsDiffer>
    <experiments>6</experiments>
</comment>
<comment type="interaction">
    <interactant intactId="EBI-716006">
        <id>Q9Y5V3</id>
    </interactant>
    <interactant intactId="EBI-351590">
        <id>P31943</id>
        <label>HNRNPH1</label>
    </interactant>
    <organismsDiffer>false</organismsDiffer>
    <experiments>3</experiments>
</comment>
<comment type="interaction">
    <interactant intactId="EBI-716006">
        <id>Q9Y5V3</id>
    </interactant>
    <interactant intactId="EBI-1779423">
        <id>P31274</id>
        <label>HOXC9</label>
    </interactant>
    <organismsDiffer>false</organismsDiffer>
    <experiments>3</experiments>
</comment>
<comment type="interaction">
    <interactant intactId="EBI-716006">
        <id>Q9Y5V3</id>
    </interactant>
    <interactant intactId="EBI-7116203">
        <id>O75031</id>
        <label>HSF2BP</label>
    </interactant>
    <organismsDiffer>false</organismsDiffer>
    <experiments>3</experiments>
</comment>
<comment type="interaction">
    <interactant intactId="EBI-716006">
        <id>Q9Y5V3</id>
    </interactant>
    <interactant intactId="EBI-349938">
        <id>P52292</id>
        <label>KPNA2</label>
    </interactant>
    <organismsDiffer>false</organismsDiffer>
    <experiments>4</experiments>
</comment>
<comment type="interaction">
    <interactant intactId="EBI-716006">
        <id>Q9Y5V3</id>
    </interactant>
    <interactant intactId="EBI-359923">
        <id>O60684</id>
        <label>KPNA6</label>
    </interactant>
    <organismsDiffer>false</organismsDiffer>
    <experiments>3</experiments>
</comment>
<comment type="interaction">
    <interactant intactId="EBI-716006">
        <id>Q9Y5V3</id>
    </interactant>
    <interactant intactId="EBI-1048945">
        <id>Q3LI72</id>
        <label>KRTAP19-5</label>
    </interactant>
    <organismsDiffer>false</organismsDiffer>
    <experiments>9</experiments>
</comment>
<comment type="interaction">
    <interactant intactId="EBI-716006">
        <id>Q9Y5V3</id>
    </interactant>
    <interactant intactId="EBI-12111050">
        <id>Q3LI64</id>
        <label>KRTAP6-1</label>
    </interactant>
    <organismsDiffer>false</organismsDiffer>
    <experiments>3</experiments>
</comment>
<comment type="interaction">
    <interactant intactId="EBI-716006">
        <id>Q9Y5V3</id>
    </interactant>
    <interactant intactId="EBI-22311199">
        <id>Q3LI67</id>
        <label>KRTAP6-3</label>
    </interactant>
    <organismsDiffer>false</organismsDiffer>
    <experiments>3</experiments>
</comment>
<comment type="interaction">
    <interactant intactId="EBI-716006">
        <id>Q9Y5V3</id>
    </interactant>
    <interactant intactId="EBI-1052558">
        <id>Q92615</id>
        <label>LARP4B</label>
    </interactant>
    <organismsDiffer>false</organismsDiffer>
    <experiments>3</experiments>
</comment>
<comment type="interaction">
    <interactant intactId="EBI-716006">
        <id>Q9Y5V3</id>
    </interactant>
    <interactant intactId="EBI-739546">
        <id>Q96PV6</id>
        <label>LENG8</label>
    </interactant>
    <organismsDiffer>false</organismsDiffer>
    <experiments>3</experiments>
</comment>
<comment type="interaction">
    <interactant intactId="EBI-716006">
        <id>Q9Y5V3</id>
    </interactant>
    <interactant intactId="EBI-2341787">
        <id>Q17RB8</id>
        <label>LONRF1</label>
    </interactant>
    <organismsDiffer>false</organismsDiffer>
    <experiments>3</experiments>
</comment>
<comment type="interaction">
    <interactant intactId="EBI-716006">
        <id>Q9Y5V3</id>
    </interactant>
    <interactant intactId="EBI-716006">
        <id>Q9Y5V3</id>
        <label>MAGED1</label>
    </interactant>
    <organismsDiffer>false</organismsDiffer>
    <experiments>4</experiments>
</comment>
<comment type="interaction">
    <interactant intactId="EBI-716006">
        <id>Q9Y5V3</id>
    </interactant>
    <interactant intactId="EBI-741424">
        <id>Q8NDC0</id>
        <label>MAPK1IP1L</label>
    </interactant>
    <organismsDiffer>false</organismsDiffer>
    <experiments>3</experiments>
</comment>
<comment type="interaction">
    <interactant intactId="EBI-716006">
        <id>Q9Y5V3</id>
    </interactant>
    <interactant intactId="EBI-724076">
        <id>Q99750</id>
        <label>MDFI</label>
    </interactant>
    <organismsDiffer>false</organismsDiffer>
    <experiments>6</experiments>
</comment>
<comment type="interaction">
    <interactant intactId="EBI-716006">
        <id>Q9Y5V3</id>
    </interactant>
    <interactant intactId="EBI-748397">
        <id>P50222</id>
        <label>MEOX2</label>
    </interactant>
    <organismsDiffer>false</organismsDiffer>
    <experiments>3</experiments>
</comment>
<comment type="interaction">
    <interactant intactId="EBI-716006">
        <id>Q9Y5V3</id>
    </interactant>
    <interactant intactId="EBI-2340269">
        <id>Q13064</id>
        <label>MKRN3</label>
    </interactant>
    <organismsDiffer>false</organismsDiffer>
    <experiments>3</experiments>
</comment>
<comment type="interaction">
    <interactant intactId="EBI-716006">
        <id>Q9Y5V3</id>
    </interactant>
    <interactant intactId="EBI-2515597">
        <id>Q96HR8</id>
        <label>NAF1</label>
    </interactant>
    <organismsDiffer>false</organismsDiffer>
    <experiments>3</experiments>
</comment>
<comment type="interaction">
    <interactant intactId="EBI-716006">
        <id>Q9Y5V3</id>
    </interactant>
    <interactant intactId="EBI-17490746">
        <id>A8MTQ0</id>
        <label>NOTO</label>
    </interactant>
    <organismsDiffer>false</organismsDiffer>
    <experiments>3</experiments>
</comment>
<comment type="interaction">
    <interactant intactId="EBI-716006">
        <id>Q9Y5V3</id>
    </interactant>
    <interactant intactId="EBI-530034">
        <id>O43189</id>
        <label>PHF1</label>
    </interactant>
    <organismsDiffer>false</organismsDiffer>
    <experiments>3</experiments>
</comment>
<comment type="interaction">
    <interactant intactId="EBI-716006">
        <id>Q9Y5V3</id>
    </interactant>
    <interactant intactId="EBI-748265">
        <id>P78337</id>
        <label>PITX1</label>
    </interactant>
    <organismsDiffer>false</organismsDiffer>
    <experiments>4</experiments>
</comment>
<comment type="interaction">
    <interactant intactId="EBI-716006">
        <id>Q9Y5V3</id>
    </interactant>
    <interactant intactId="EBI-714606">
        <id>Q8NG27</id>
        <label>PJA1</label>
    </interactant>
    <organismsDiffer>false</organismsDiffer>
    <experiments>7</experiments>
</comment>
<comment type="interaction">
    <interactant intactId="EBI-716006">
        <id>Q9Y5V3</id>
    </interactant>
    <interactant intactId="EBI-10171633">
        <id>Q96PV4</id>
        <label>PNMA5</label>
    </interactant>
    <organismsDiffer>false</organismsDiffer>
    <experiments>3</experiments>
</comment>
<comment type="interaction">
    <interactant intactId="EBI-716006">
        <id>Q9Y5V3</id>
    </interactant>
    <interactant intactId="EBI-11956563">
        <id>Q96HA1-2</id>
        <label>POM121</label>
    </interactant>
    <organismsDiffer>false</organismsDiffer>
    <experiments>3</experiments>
</comment>
<comment type="interaction">
    <interactant intactId="EBI-716006">
        <id>Q9Y5V3</id>
    </interactant>
    <interactant intactId="EBI-1053424">
        <id>O43741</id>
        <label>PRKAB2</label>
    </interactant>
    <organismsDiffer>false</organismsDiffer>
    <experiments>4</experiments>
</comment>
<comment type="interaction">
    <interactant intactId="EBI-716006">
        <id>Q9Y5V3</id>
    </interactant>
    <interactant intactId="EBI-9027467">
        <id>O75360</id>
        <label>PROP1</label>
    </interactant>
    <organismsDiffer>false</organismsDiffer>
    <experiments>3</experiments>
</comment>
<comment type="interaction">
    <interactant intactId="EBI-716006">
        <id>Q9Y5V3</id>
    </interactant>
    <interactant intactId="EBI-12754095">
        <id>P86480</id>
        <label>PRR20D</label>
    </interactant>
    <organismsDiffer>false</organismsDiffer>
    <experiments>3</experiments>
</comment>
<comment type="interaction">
    <interactant intactId="EBI-716006">
        <id>Q9Y5V3</id>
    </interactant>
    <interactant intactId="EBI-11986293">
        <id>P0CG20</id>
        <label>PRR35</label>
    </interactant>
    <organismsDiffer>false</organismsDiffer>
    <experiments>3</experiments>
</comment>
<comment type="interaction">
    <interactant intactId="EBI-716006">
        <id>Q9Y5V3</id>
    </interactant>
    <interactant intactId="EBI-744023">
        <id>Q9BTL3</id>
        <label>RAMAC</label>
    </interactant>
    <organismsDiffer>false</organismsDiffer>
    <experiments>3</experiments>
</comment>
<comment type="interaction">
    <interactant intactId="EBI-716006">
        <id>Q9Y5V3</id>
    </interactant>
    <interactant intactId="EBI-746056">
        <id>O43251</id>
        <label>RBFOX2</label>
    </interactant>
    <organismsDiffer>false</organismsDiffer>
    <experiments>3</experiments>
</comment>
<comment type="interaction">
    <interactant intactId="EBI-716006">
        <id>Q9Y5V3</id>
    </interactant>
    <interactant intactId="EBI-11963050">
        <id>O43251-10</id>
        <label>RBFOX2</label>
    </interactant>
    <organismsDiffer>false</organismsDiffer>
    <experiments>3</experiments>
</comment>
<comment type="interaction">
    <interactant intactId="EBI-716006">
        <id>Q9Y5V3</id>
    </interactant>
    <interactant intactId="EBI-780319">
        <id>Q86U06</id>
        <label>RBM23</label>
    </interactant>
    <organismsDiffer>false</organismsDiffer>
    <experiments>3</experiments>
</comment>
<comment type="interaction">
    <interactant intactId="EBI-716006">
        <id>Q9Y5V3</id>
    </interactant>
    <interactant intactId="EBI-740322">
        <id>Q93062</id>
        <label>RBPMS</label>
    </interactant>
    <organismsDiffer>false</organismsDiffer>
    <experiments>3</experiments>
</comment>
<comment type="interaction">
    <interactant intactId="EBI-716006">
        <id>Q9Y5V3</id>
    </interactant>
    <interactant intactId="EBI-11987469">
        <id>Q6ZRY4</id>
        <label>RBPMS2</label>
    </interactant>
    <organismsDiffer>false</organismsDiffer>
    <experiments>3</experiments>
</comment>
<comment type="interaction">
    <interactant intactId="EBI-716006">
        <id>Q9Y5V3</id>
    </interactant>
    <interactant intactId="EBI-372094">
        <id>Q9BQY4</id>
        <label>RHOXF2</label>
    </interactant>
    <organismsDiffer>false</organismsDiffer>
    <experiments>6</experiments>
</comment>
<comment type="interaction">
    <interactant intactId="EBI-716006">
        <id>Q9Y5V3</id>
    </interactant>
    <interactant intactId="EBI-16428950">
        <id>A0A0S2Z4G9</id>
        <label>RNF6</label>
    </interactant>
    <organismsDiffer>false</organismsDiffer>
    <experiments>3</experiments>
</comment>
<comment type="interaction">
    <interactant intactId="EBI-716006">
        <id>Q9Y5V3</id>
    </interactant>
    <interactant intactId="EBI-6257312">
        <id>Q9BVN2</id>
        <label>RUSC1</label>
    </interactant>
    <organismsDiffer>false</organismsDiffer>
    <experiments>3</experiments>
</comment>
<comment type="interaction">
    <interactant intactId="EBI-716006">
        <id>Q9Y5V3</id>
    </interactant>
    <interactant intactId="EBI-2822515">
        <id>Q8WU79</id>
        <label>SMAP2</label>
    </interactant>
    <organismsDiffer>false</organismsDiffer>
    <experiments>6</experiments>
</comment>
<comment type="interaction">
    <interactant intactId="EBI-716006">
        <id>Q9Y5V3</id>
    </interactant>
    <interactant intactId="EBI-395421">
        <id>Q16637</id>
        <label>SMN2</label>
    </interactant>
    <organismsDiffer>false</organismsDiffer>
    <experiments>3</experiments>
</comment>
<comment type="interaction">
    <interactant intactId="EBI-716006">
        <id>Q9Y5V3</id>
    </interactant>
    <interactant intactId="EBI-766589">
        <id>P09234</id>
        <label>SNRPC</label>
    </interactant>
    <organismsDiffer>false</organismsDiffer>
    <experiments>3</experiments>
</comment>
<comment type="interaction">
    <interactant intactId="EBI-716006">
        <id>Q9Y5V3</id>
    </interactant>
    <interactant intactId="EBI-10246938">
        <id>Q5TAL4</id>
        <label>SNRPC</label>
    </interactant>
    <organismsDiffer>false</organismsDiffer>
    <experiments>3</experiments>
</comment>
<comment type="interaction">
    <interactant intactId="EBI-716006">
        <id>Q9Y5V3</id>
    </interactant>
    <interactant intactId="EBI-1167533">
        <id>P56693</id>
        <label>SOX10</label>
    </interactant>
    <organismsDiffer>false</organismsDiffer>
    <experiments>3</experiments>
</comment>
<comment type="interaction">
    <interactant intactId="EBI-716006">
        <id>Q9Y5V3</id>
    </interactant>
    <interactant intactId="EBI-11954419">
        <id>P35711-4</id>
        <label>SOX5</label>
    </interactant>
    <organismsDiffer>false</organismsDiffer>
    <experiments>3</experiments>
</comment>
<comment type="interaction">
    <interactant intactId="EBI-716006">
        <id>Q9Y5V3</id>
    </interactant>
    <interactant intactId="EBI-2824328">
        <id>O95947</id>
        <label>TBX6</label>
    </interactant>
    <organismsDiffer>false</organismsDiffer>
    <experiments>3</experiments>
</comment>
<comment type="interaction">
    <interactant intactId="EBI-716006">
        <id>Q9Y5V3</id>
    </interactant>
    <interactant intactId="EBI-357061">
        <id>Q92734</id>
        <label>TFG</label>
    </interactant>
    <organismsDiffer>false</organismsDiffer>
    <experiments>8</experiments>
</comment>
<comment type="interaction">
    <interactant intactId="EBI-716006">
        <id>Q9Y5V3</id>
    </interactant>
    <interactant intactId="EBI-11064654">
        <id>Q01085-2</id>
        <label>TIAL1</label>
    </interactant>
    <organismsDiffer>false</organismsDiffer>
    <experiments>3</experiments>
</comment>
<comment type="interaction">
    <interactant intactId="EBI-716006">
        <id>Q9Y5V3</id>
    </interactant>
    <interactant intactId="EBI-3939165">
        <id>O43711</id>
        <label>TLX3</label>
    </interactant>
    <organismsDiffer>false</organismsDiffer>
    <experiments>3</experiments>
</comment>
<comment type="interaction">
    <interactant intactId="EBI-716006">
        <id>Q9Y5V3</id>
    </interactant>
    <interactant intactId="EBI-10241197">
        <id>Q3SY00</id>
        <label>TSGA10IP</label>
    </interactant>
    <organismsDiffer>false</organismsDiffer>
    <experiments>3</experiments>
</comment>
<comment type="interaction">
    <interactant intactId="EBI-716006">
        <id>Q9Y5V3</id>
    </interactant>
    <interactant intactId="EBI-6447954">
        <id>Q5W5X9</id>
        <label>TTC23</label>
    </interactant>
    <organismsDiffer>false</organismsDiffer>
    <experiments>3</experiments>
</comment>
<comment type="interaction">
    <interactant intactId="EBI-716006">
        <id>Q9Y5V3</id>
    </interactant>
    <interactant intactId="EBI-9090990">
        <id>Q5W5X9-3</id>
        <label>TTC23</label>
    </interactant>
    <organismsDiffer>false</organismsDiffer>
    <experiments>3</experiments>
</comment>
<comment type="interaction">
    <interactant intactId="EBI-716006">
        <id>Q9Y5V3</id>
    </interactant>
    <interactant intactId="EBI-8636434">
        <id>Q5I0X7</id>
        <label>TTC32</label>
    </interactant>
    <organismsDiffer>false</organismsDiffer>
    <experiments>3</experiments>
</comment>
<comment type="interaction">
    <interactant intactId="EBI-716006">
        <id>Q9Y5V3</id>
    </interactant>
    <interactant intactId="EBI-947187">
        <id>Q9UHD9</id>
        <label>UBQLN2</label>
    </interactant>
    <organismsDiffer>false</organismsDiffer>
    <experiments>3</experiments>
</comment>
<comment type="interaction">
    <interactant intactId="EBI-716006">
        <id>Q9Y5V3</id>
    </interactant>
    <interactant intactId="EBI-10191303">
        <id>O95231</id>
        <label>VENTX</label>
    </interactant>
    <organismsDiffer>false</organismsDiffer>
    <experiments>3</experiments>
</comment>
<comment type="interaction">
    <interactant intactId="EBI-716006">
        <id>Q9Y5V3</id>
    </interactant>
    <interactant intactId="EBI-1051237">
        <id>Q9BYJ9</id>
        <label>YTHDF1</label>
    </interactant>
    <organismsDiffer>false</organismsDiffer>
    <experiments>3</experiments>
</comment>
<comment type="interaction">
    <interactant intactId="EBI-716006">
        <id>Q9Y5V3</id>
    </interactant>
    <interactant intactId="EBI-8656416">
        <id>Q68DK2-5</id>
        <label>ZFYVE26</label>
    </interactant>
    <organismsDiffer>false</organismsDiffer>
    <experiments>3</experiments>
</comment>
<comment type="interaction">
    <interactant intactId="EBI-716006">
        <id>Q9Y5V3</id>
    </interactant>
    <interactant intactId="EBI-11963196">
        <id>Q15915</id>
        <label>ZIC1</label>
    </interactant>
    <organismsDiffer>false</organismsDiffer>
    <experiments>3</experiments>
</comment>
<comment type="interaction">
    <interactant intactId="EBI-716006">
        <id>Q9Y5V3</id>
    </interactant>
    <interactant intactId="EBI-948288">
        <id>Q96MN9</id>
        <label>ZNF488</label>
    </interactant>
    <organismsDiffer>false</organismsDiffer>
    <experiments>3</experiments>
</comment>
<comment type="interaction">
    <interactant intactId="EBI-716006">
        <id>Q9Y5V3</id>
    </interactant>
    <interactant intactId="EBI-16429014">
        <id>A0A0S2Z5X4</id>
        <label>ZNF688</label>
    </interactant>
    <organismsDiffer>false</organismsDiffer>
    <experiments>3</experiments>
</comment>
<comment type="subcellular location">
    <subcellularLocation>
        <location evidence="1">Cytoplasm</location>
    </subcellularLocation>
    <subcellularLocation>
        <location evidence="1">Cell membrane</location>
        <topology evidence="1">Peripheral membrane protein</topology>
    </subcellularLocation>
    <subcellularLocation>
        <location evidence="1">Nucleus</location>
    </subcellularLocation>
    <text evidence="1">Expression shifts from the cytoplasm to the plasma membrane upon stimulation with NGF.</text>
</comment>
<comment type="alternative products">
    <event type="alternative splicing"/>
    <isoform>
        <id>Q9Y5V3-1</id>
        <name>1</name>
        <sequence type="displayed"/>
    </isoform>
    <isoform>
        <id>Q9Y5V3-2</id>
        <name>2</name>
        <sequence type="described" ref="VSP_009286"/>
    </isoform>
</comment>
<comment type="tissue specificity">
    <text>Expressed in bone marrow stromal cells from both multiple myeloma patients and healthy donors. Seems to be ubiquitously expressed.</text>
</comment>
<comment type="sequence caution" evidence="6">
    <conflict type="erroneous initiation">
        <sequence resource="EMBL-CDS" id="AAD31421"/>
    </conflict>
    <text>Truncated N-terminus.</text>
</comment>
<comment type="sequence caution" evidence="6">
    <conflict type="erroneous initiation">
        <sequence resource="EMBL-CDS" id="AAG35551"/>
    </conflict>
    <text>Truncated N-terminus.</text>
</comment>
<keyword id="KW-0025">Alternative splicing</keyword>
<keyword id="KW-0090">Biological rhythms</keyword>
<keyword id="KW-1003">Cell membrane</keyword>
<keyword id="KW-0963">Cytoplasm</keyword>
<keyword id="KW-0472">Membrane</keyword>
<keyword id="KW-0539">Nucleus</keyword>
<keyword id="KW-0597">Phosphoprotein</keyword>
<keyword id="KW-1267">Proteomics identification</keyword>
<keyword id="KW-1185">Reference proteome</keyword>
<keyword id="KW-0677">Repeat</keyword>
<keyword id="KW-0825">Tumor antigen</keyword>
<keyword id="KW-0833">Ubl conjugation pathway</keyword>
<sequence>MAQKMDCGAGLLGFQAEASVEDSALLMQTLMEAIQISEAPPTNQATAAASPQSSQPPTANEMADIQVSAAAARPKSAFKVQNATTKGPNGVYDFSQAHNAKDVPNTQPKAAFKSQNATPKGPNAAYDFSQAATTGELAANKSEMAFKAQNATTKVGPNATYNFSQSLNANDLANSRPKTPFKAWNDTTKAPTADTQTQNVNQAKMATSQADIETDPGISEPDGATAQTSADGSQAQNLESRTIIRGKRTRKINNLNVEENSSGDQRRAPLAAGTWRSAPVPVTTQNPPGAPPNVLWQTPLAWQNPSGWQNQTARQTPPARQSPPARQTPPAWQNPVAWQNPVIWPNPVIWQNPVIWPNPIVWPGPVVWPNPLAWQNPPGWQTPPGWQTPPGWQGPPDWQGPPDWPLPPDWPLPPDWPLPTDWPLPPDWIPADWPIPPDWQNLRPSPNLRPSPNSRASQNPGAAQPRDVALLQERANKLVKYLMLKDYTKVPIKRSEMLRDIIREYTDVYPEIIERACFVLEKKFGIQLKEIDKEEHLYILISTPESLAGILGTTKDTPKLGLLLVILGVIFMNGNRASEAVLWEALRKMGLRPGVRHPLLGDLRKLLTYEFVKQKYLDYRRVPNSNPPEYEFLWGLRSYHETSKMKVLRFIAEVQKRDPRDWTAQFMEAADEALDALDAAAAEAEARAEARTRMGIGDEAVSGPWSWDDIEFELLTWDEEGDFGDPWSRIPFTFWARYHQNARSRFPQTFAGPIIGPGGTASANFAANFGAIGFFWVE</sequence>
<name>MAGD1_HUMAN</name>
<proteinExistence type="evidence at protein level"/>
<gene>
    <name type="primary">MAGED1</name>
    <name type="synonym">NRAGE</name>
    <name type="ORF">PP2250</name>
    <name type="ORF">PRO2292</name>
</gene>
<protein>
    <recommendedName>
        <fullName>Melanoma-associated antigen D1</fullName>
    </recommendedName>
    <alternativeName>
        <fullName>MAGE tumor antigen CCF</fullName>
    </alternativeName>
    <alternativeName>
        <fullName>MAGE-D1 antigen</fullName>
    </alternativeName>
    <alternativeName>
        <fullName>Neurotrophin receptor-interacting MAGE homolog</fullName>
    </alternativeName>
</protein>
<reference key="1">
    <citation type="journal article" date="2000" name="Neuron">
        <title>NRAGE, a novel MAGE protein, interacts with the p75 neurotrophin receptor and facilitates nerve growth factor dependent apoptosis.</title>
        <authorList>
            <person name="Salehi A.H."/>
            <person name="Roux P.P."/>
            <person name="Kubu C.J."/>
            <person name="Zeindler C."/>
            <person name="Bhakar A."/>
            <person name="Tannis L.-L."/>
            <person name="Verdi J.M."/>
            <person name="Barker P.A."/>
        </authorList>
    </citation>
    <scope>NUCLEOTIDE SEQUENCE [MRNA] (ISOFORM 1)</scope>
</reference>
<reference key="2">
    <citation type="journal article" date="2004" name="FEBS Lett.">
        <title>hNRAGE, a human neurotrophin receptor interacting MAGE homologue, regulates p53 transcriptional activity and inhibits cell proliferation.</title>
        <authorList>
            <person name="Wen C.-J."/>
            <person name="Xue B."/>
            <person name="Qin W.-X."/>
            <person name="Yu M."/>
            <person name="Zhang M.-Y."/>
            <person name="Zhao D.-H."/>
            <person name="Gao X."/>
            <person name="Gu J.-R."/>
            <person name="Li C.-J."/>
        </authorList>
    </citation>
    <scope>NUCLEOTIDE SEQUENCE [MRNA] (ISOFORM 1)</scope>
    <source>
        <tissue>Placenta</tissue>
    </source>
</reference>
<reference key="3">
    <citation type="submission" date="2000-08" db="EMBL/GenBank/DDBJ databases">
        <title>Identification and characterization of a new member of the MAGE gene family.</title>
        <authorList>
            <person name="Chen Y."/>
        </authorList>
    </citation>
    <scope>NUCLEOTIDE SEQUENCE [MRNA] (ISOFORM 1)</scope>
</reference>
<reference key="4">
    <citation type="journal article" date="2005" name="Nature">
        <title>The DNA sequence of the human X chromosome.</title>
        <authorList>
            <person name="Ross M.T."/>
            <person name="Grafham D.V."/>
            <person name="Coffey A.J."/>
            <person name="Scherer S."/>
            <person name="McLay K."/>
            <person name="Muzny D."/>
            <person name="Platzer M."/>
            <person name="Howell G.R."/>
            <person name="Burrows C."/>
            <person name="Bird C.P."/>
            <person name="Frankish A."/>
            <person name="Lovell F.L."/>
            <person name="Howe K.L."/>
            <person name="Ashurst J.L."/>
            <person name="Fulton R.S."/>
            <person name="Sudbrak R."/>
            <person name="Wen G."/>
            <person name="Jones M.C."/>
            <person name="Hurles M.E."/>
            <person name="Andrews T.D."/>
            <person name="Scott C.E."/>
            <person name="Searle S."/>
            <person name="Ramser J."/>
            <person name="Whittaker A."/>
            <person name="Deadman R."/>
            <person name="Carter N.P."/>
            <person name="Hunt S.E."/>
            <person name="Chen R."/>
            <person name="Cree A."/>
            <person name="Gunaratne P."/>
            <person name="Havlak P."/>
            <person name="Hodgson A."/>
            <person name="Metzker M.L."/>
            <person name="Richards S."/>
            <person name="Scott G."/>
            <person name="Steffen D."/>
            <person name="Sodergren E."/>
            <person name="Wheeler D.A."/>
            <person name="Worley K.C."/>
            <person name="Ainscough R."/>
            <person name="Ambrose K.D."/>
            <person name="Ansari-Lari M.A."/>
            <person name="Aradhya S."/>
            <person name="Ashwell R.I."/>
            <person name="Babbage A.K."/>
            <person name="Bagguley C.L."/>
            <person name="Ballabio A."/>
            <person name="Banerjee R."/>
            <person name="Barker G.E."/>
            <person name="Barlow K.F."/>
            <person name="Barrett I.P."/>
            <person name="Bates K.N."/>
            <person name="Beare D.M."/>
            <person name="Beasley H."/>
            <person name="Beasley O."/>
            <person name="Beck A."/>
            <person name="Bethel G."/>
            <person name="Blechschmidt K."/>
            <person name="Brady N."/>
            <person name="Bray-Allen S."/>
            <person name="Bridgeman A.M."/>
            <person name="Brown A.J."/>
            <person name="Brown M.J."/>
            <person name="Bonnin D."/>
            <person name="Bruford E.A."/>
            <person name="Buhay C."/>
            <person name="Burch P."/>
            <person name="Burford D."/>
            <person name="Burgess J."/>
            <person name="Burrill W."/>
            <person name="Burton J."/>
            <person name="Bye J.M."/>
            <person name="Carder C."/>
            <person name="Carrel L."/>
            <person name="Chako J."/>
            <person name="Chapman J.C."/>
            <person name="Chavez D."/>
            <person name="Chen E."/>
            <person name="Chen G."/>
            <person name="Chen Y."/>
            <person name="Chen Z."/>
            <person name="Chinault C."/>
            <person name="Ciccodicola A."/>
            <person name="Clark S.Y."/>
            <person name="Clarke G."/>
            <person name="Clee C.M."/>
            <person name="Clegg S."/>
            <person name="Clerc-Blankenburg K."/>
            <person name="Clifford K."/>
            <person name="Cobley V."/>
            <person name="Cole C.G."/>
            <person name="Conquer J.S."/>
            <person name="Corby N."/>
            <person name="Connor R.E."/>
            <person name="David R."/>
            <person name="Davies J."/>
            <person name="Davis C."/>
            <person name="Davis J."/>
            <person name="Delgado O."/>
            <person name="Deshazo D."/>
            <person name="Dhami P."/>
            <person name="Ding Y."/>
            <person name="Dinh H."/>
            <person name="Dodsworth S."/>
            <person name="Draper H."/>
            <person name="Dugan-Rocha S."/>
            <person name="Dunham A."/>
            <person name="Dunn M."/>
            <person name="Durbin K.J."/>
            <person name="Dutta I."/>
            <person name="Eades T."/>
            <person name="Ellwood M."/>
            <person name="Emery-Cohen A."/>
            <person name="Errington H."/>
            <person name="Evans K.L."/>
            <person name="Faulkner L."/>
            <person name="Francis F."/>
            <person name="Frankland J."/>
            <person name="Fraser A.E."/>
            <person name="Galgoczy P."/>
            <person name="Gilbert J."/>
            <person name="Gill R."/>
            <person name="Gloeckner G."/>
            <person name="Gregory S.G."/>
            <person name="Gribble S."/>
            <person name="Griffiths C."/>
            <person name="Grocock R."/>
            <person name="Gu Y."/>
            <person name="Gwilliam R."/>
            <person name="Hamilton C."/>
            <person name="Hart E.A."/>
            <person name="Hawes A."/>
            <person name="Heath P.D."/>
            <person name="Heitmann K."/>
            <person name="Hennig S."/>
            <person name="Hernandez J."/>
            <person name="Hinzmann B."/>
            <person name="Ho S."/>
            <person name="Hoffs M."/>
            <person name="Howden P.J."/>
            <person name="Huckle E.J."/>
            <person name="Hume J."/>
            <person name="Hunt P.J."/>
            <person name="Hunt A.R."/>
            <person name="Isherwood J."/>
            <person name="Jacob L."/>
            <person name="Johnson D."/>
            <person name="Jones S."/>
            <person name="de Jong P.J."/>
            <person name="Joseph S.S."/>
            <person name="Keenan S."/>
            <person name="Kelly S."/>
            <person name="Kershaw J.K."/>
            <person name="Khan Z."/>
            <person name="Kioschis P."/>
            <person name="Klages S."/>
            <person name="Knights A.J."/>
            <person name="Kosiura A."/>
            <person name="Kovar-Smith C."/>
            <person name="Laird G.K."/>
            <person name="Langford C."/>
            <person name="Lawlor S."/>
            <person name="Leversha M."/>
            <person name="Lewis L."/>
            <person name="Liu W."/>
            <person name="Lloyd C."/>
            <person name="Lloyd D.M."/>
            <person name="Loulseged H."/>
            <person name="Loveland J.E."/>
            <person name="Lovell J.D."/>
            <person name="Lozado R."/>
            <person name="Lu J."/>
            <person name="Lyne R."/>
            <person name="Ma J."/>
            <person name="Maheshwari M."/>
            <person name="Matthews L.H."/>
            <person name="McDowall J."/>
            <person name="McLaren S."/>
            <person name="McMurray A."/>
            <person name="Meidl P."/>
            <person name="Meitinger T."/>
            <person name="Milne S."/>
            <person name="Miner G."/>
            <person name="Mistry S.L."/>
            <person name="Morgan M."/>
            <person name="Morris S."/>
            <person name="Mueller I."/>
            <person name="Mullikin J.C."/>
            <person name="Nguyen N."/>
            <person name="Nordsiek G."/>
            <person name="Nyakatura G."/>
            <person name="O'dell C.N."/>
            <person name="Okwuonu G."/>
            <person name="Palmer S."/>
            <person name="Pandian R."/>
            <person name="Parker D."/>
            <person name="Parrish J."/>
            <person name="Pasternak S."/>
            <person name="Patel D."/>
            <person name="Pearce A.V."/>
            <person name="Pearson D.M."/>
            <person name="Pelan S.E."/>
            <person name="Perez L."/>
            <person name="Porter K.M."/>
            <person name="Ramsey Y."/>
            <person name="Reichwald K."/>
            <person name="Rhodes S."/>
            <person name="Ridler K.A."/>
            <person name="Schlessinger D."/>
            <person name="Schueler M.G."/>
            <person name="Sehra H.K."/>
            <person name="Shaw-Smith C."/>
            <person name="Shen H."/>
            <person name="Sheridan E.M."/>
            <person name="Shownkeen R."/>
            <person name="Skuce C.D."/>
            <person name="Smith M.L."/>
            <person name="Sotheran E.C."/>
            <person name="Steingruber H.E."/>
            <person name="Steward C.A."/>
            <person name="Storey R."/>
            <person name="Swann R.M."/>
            <person name="Swarbreck D."/>
            <person name="Tabor P.E."/>
            <person name="Taudien S."/>
            <person name="Taylor T."/>
            <person name="Teague B."/>
            <person name="Thomas K."/>
            <person name="Thorpe A."/>
            <person name="Timms K."/>
            <person name="Tracey A."/>
            <person name="Trevanion S."/>
            <person name="Tromans A.C."/>
            <person name="d'Urso M."/>
            <person name="Verduzco D."/>
            <person name="Villasana D."/>
            <person name="Waldron L."/>
            <person name="Wall M."/>
            <person name="Wang Q."/>
            <person name="Warren J."/>
            <person name="Warry G.L."/>
            <person name="Wei X."/>
            <person name="West A."/>
            <person name="Whitehead S.L."/>
            <person name="Whiteley M.N."/>
            <person name="Wilkinson J.E."/>
            <person name="Willey D.L."/>
            <person name="Williams G."/>
            <person name="Williams L."/>
            <person name="Williamson A."/>
            <person name="Williamson H."/>
            <person name="Wilming L."/>
            <person name="Woodmansey R.L."/>
            <person name="Wray P.W."/>
            <person name="Yen J."/>
            <person name="Zhang J."/>
            <person name="Zhou J."/>
            <person name="Zoghbi H."/>
            <person name="Zorilla S."/>
            <person name="Buck D."/>
            <person name="Reinhardt R."/>
            <person name="Poustka A."/>
            <person name="Rosenthal A."/>
            <person name="Lehrach H."/>
            <person name="Meindl A."/>
            <person name="Minx P.J."/>
            <person name="Hillier L.W."/>
            <person name="Willard H.F."/>
            <person name="Wilson R.K."/>
            <person name="Waterston R.H."/>
            <person name="Rice C.M."/>
            <person name="Vaudin M."/>
            <person name="Coulson A."/>
            <person name="Nelson D.L."/>
            <person name="Weinstock G."/>
            <person name="Sulston J.E."/>
            <person name="Durbin R.M."/>
            <person name="Hubbard T."/>
            <person name="Gibbs R.A."/>
            <person name="Beck S."/>
            <person name="Rogers J."/>
            <person name="Bentley D.R."/>
        </authorList>
    </citation>
    <scope>NUCLEOTIDE SEQUENCE [LARGE SCALE GENOMIC DNA]</scope>
</reference>
<reference key="5">
    <citation type="journal article" date="2004" name="Genome Res.">
        <title>The status, quality, and expansion of the NIH full-length cDNA project: the Mammalian Gene Collection (MGC).</title>
        <authorList>
            <consortium name="The MGC Project Team"/>
        </authorList>
    </citation>
    <scope>NUCLEOTIDE SEQUENCE [LARGE SCALE MRNA] (ISOFORMS 1 AND 2)</scope>
    <source>
        <tissue>Blood</tissue>
        <tissue>Skin</tissue>
    </source>
</reference>
<reference key="6">
    <citation type="journal article" date="1999" name="Genomics">
        <title>Identification of a new, unorthodox member of the MAGE gene family.</title>
        <authorList>
            <person name="Pold M."/>
            <person name="Zhou J."/>
            <person name="Chen G.L."/>
            <person name="Hall J.M."/>
            <person name="Vescio R.A."/>
            <person name="Berenson J.R."/>
        </authorList>
    </citation>
    <scope>NUCLEOTIDE SEQUENCE [MRNA] OF 202-778 (ISOFORM 1)</scope>
    <source>
        <tissue>Bone marrow</tissue>
    </source>
</reference>
<reference key="7">
    <citation type="journal article" date="2007" name="BMC Genomics">
        <title>The full-ORF clone resource of the German cDNA consortium.</title>
        <authorList>
            <person name="Bechtel S."/>
            <person name="Rosenfelder H."/>
            <person name="Duda A."/>
            <person name="Schmidt C.P."/>
            <person name="Ernst U."/>
            <person name="Wellenreuther R."/>
            <person name="Mehrle A."/>
            <person name="Schuster C."/>
            <person name="Bahr A."/>
            <person name="Bloecker H."/>
            <person name="Heubner D."/>
            <person name="Hoerlein A."/>
            <person name="Michel G."/>
            <person name="Wedler H."/>
            <person name="Koehrer K."/>
            <person name="Ottenwaelder B."/>
            <person name="Poustka A."/>
            <person name="Wiemann S."/>
            <person name="Schupp I."/>
        </authorList>
    </citation>
    <scope>NUCLEOTIDE SEQUENCE [LARGE SCALE MRNA] OF 304-778</scope>
    <source>
        <tissue>Testis</tissue>
    </source>
</reference>
<reference key="8">
    <citation type="journal article" date="2001" name="Yi Chuan Xue Bao">
        <title>A new melanoma antigen-encoding gene subfamily in human chromosome X.</title>
        <authorList>
            <person name="Zhang C.G."/>
            <person name="Xing G.C."/>
            <person name="Wei H.D."/>
            <person name="Yu Y.T."/>
            <person name="He F.C."/>
        </authorList>
    </citation>
    <scope>NUCLEOTIDE SEQUENCE [LARGE SCALE MRNA] OF 396-778</scope>
    <source>
        <tissue>Fetal liver</tissue>
    </source>
</reference>
<reference key="9">
    <citation type="journal article" date="2000" name="Genomics">
        <title>Identification of the translational initiation codon in human MAGED1.</title>
        <authorList>
            <person name="Kubu C.J."/>
            <person name="Goldhawk D.G."/>
            <person name="Barker P.A."/>
            <person name="Verdi J.M."/>
        </authorList>
    </citation>
    <scope>IDENTIFICATION OF THE TRANSLATIONAL INITIATION CODON</scope>
</reference>
<reference key="10">
    <citation type="journal article" date="2005" name="Nat. Biotechnol.">
        <title>Immunoaffinity profiling of tyrosine phosphorylation in cancer cells.</title>
        <authorList>
            <person name="Rush J."/>
            <person name="Moritz A."/>
            <person name="Lee K.A."/>
            <person name="Guo A."/>
            <person name="Goss V.L."/>
            <person name="Spek E.J."/>
            <person name="Zhang H."/>
            <person name="Zha X.-M."/>
            <person name="Polakiewicz R.D."/>
            <person name="Comb M.J."/>
        </authorList>
    </citation>
    <scope>PHOSPHORYLATION [LARGE SCALE ANALYSIS] AT TYR-92</scope>
    <scope>IDENTIFICATION BY MASS SPECTROMETRY [LARGE SCALE ANALYSIS]</scope>
</reference>
<reference key="11">
    <citation type="journal article" date="2010" name="Mol. Cell">
        <title>MAGE-RING protein complexes comprise a family of E3 ubiquitin ligases.</title>
        <authorList>
            <person name="Doyle J.M."/>
            <person name="Gao J."/>
            <person name="Wang J."/>
            <person name="Yang M."/>
            <person name="Potts P.R."/>
        </authorList>
    </citation>
    <scope>FUNCTION</scope>
    <scope>INTERACTION WITH TRIM28 AND PJA1</scope>
</reference>
<feature type="chain" id="PRO_0000156723" description="Melanoma-associated antigen D1">
    <location>
        <begin position="1"/>
        <end position="778"/>
    </location>
</feature>
<feature type="repeat" description="1">
    <location>
        <begin position="296"/>
        <end position="301"/>
    </location>
</feature>
<feature type="repeat" description="2">
    <location>
        <begin position="302"/>
        <end position="307"/>
    </location>
</feature>
<feature type="repeat" description="3">
    <location>
        <begin position="308"/>
        <end position="313"/>
    </location>
</feature>
<feature type="repeat" description="4">
    <location>
        <begin position="332"/>
        <end position="337"/>
    </location>
</feature>
<feature type="repeat" description="5">
    <location>
        <begin position="338"/>
        <end position="343"/>
    </location>
</feature>
<feature type="repeat" description="6">
    <location>
        <begin position="344"/>
        <end position="349"/>
    </location>
</feature>
<feature type="repeat" description="7">
    <location>
        <begin position="350"/>
        <end position="355"/>
    </location>
</feature>
<feature type="repeat" description="8">
    <location>
        <begin position="356"/>
        <end position="361"/>
    </location>
</feature>
<feature type="repeat" description="9">
    <location>
        <begin position="362"/>
        <end position="367"/>
    </location>
</feature>
<feature type="repeat" description="10">
    <location>
        <begin position="368"/>
        <end position="373"/>
    </location>
</feature>
<feature type="repeat" description="11">
    <location>
        <begin position="374"/>
        <end position="379"/>
    </location>
</feature>
<feature type="repeat" description="12">
    <location>
        <begin position="380"/>
        <end position="385"/>
    </location>
</feature>
<feature type="repeat" description="13">
    <location>
        <begin position="386"/>
        <end position="391"/>
    </location>
</feature>
<feature type="repeat" description="14">
    <location>
        <begin position="392"/>
        <end position="397"/>
    </location>
</feature>
<feature type="repeat" description="15">
    <location>
        <begin position="398"/>
        <end position="403"/>
    </location>
</feature>
<feature type="repeat" description="16">
    <location>
        <begin position="404"/>
        <end position="409"/>
    </location>
</feature>
<feature type="repeat" description="17">
    <location>
        <begin position="410"/>
        <end position="415"/>
    </location>
</feature>
<feature type="repeat" description="18">
    <location>
        <begin position="416"/>
        <end position="421"/>
    </location>
</feature>
<feature type="repeat" description="19">
    <location>
        <begin position="422"/>
        <end position="427"/>
    </location>
</feature>
<feature type="repeat" description="20; approximate">
    <location>
        <begin position="428"/>
        <end position="432"/>
    </location>
</feature>
<feature type="repeat" description="21">
    <location>
        <begin position="433"/>
        <end position="438"/>
    </location>
</feature>
<feature type="repeat" description="22">
    <location>
        <begin position="439"/>
        <end position="444"/>
    </location>
</feature>
<feature type="domain" description="MAGE" evidence="2">
    <location>
        <begin position="471"/>
        <end position="669"/>
    </location>
</feature>
<feature type="region of interest" description="Disordered" evidence="3">
    <location>
        <begin position="41"/>
        <end position="60"/>
    </location>
</feature>
<feature type="region of interest" description="Disordered" evidence="3">
    <location>
        <begin position="78"/>
        <end position="123"/>
    </location>
</feature>
<feature type="region of interest" description="Disordered" evidence="3">
    <location>
        <begin position="182"/>
        <end position="333"/>
    </location>
</feature>
<feature type="region of interest" description="22 X 6 AA tandem repeats of W-[PQ]-X-P-X-X">
    <location>
        <begin position="296"/>
        <end position="444"/>
    </location>
</feature>
<feature type="region of interest" description="Disordered" evidence="3">
    <location>
        <begin position="376"/>
        <end position="412"/>
    </location>
</feature>
<feature type="region of interest" description="Disordered" evidence="3">
    <location>
        <begin position="440"/>
        <end position="466"/>
    </location>
</feature>
<feature type="compositionally biased region" description="Polar residues" evidence="3">
    <location>
        <begin position="104"/>
        <end position="118"/>
    </location>
</feature>
<feature type="compositionally biased region" description="Polar residues" evidence="3">
    <location>
        <begin position="185"/>
        <end position="211"/>
    </location>
</feature>
<feature type="compositionally biased region" description="Polar residues" evidence="3">
    <location>
        <begin position="225"/>
        <end position="240"/>
    </location>
</feature>
<feature type="compositionally biased region" description="Polar residues" evidence="3">
    <location>
        <begin position="253"/>
        <end position="263"/>
    </location>
</feature>
<feature type="compositionally biased region" description="Polar residues" evidence="3">
    <location>
        <begin position="300"/>
        <end position="319"/>
    </location>
</feature>
<feature type="compositionally biased region" description="Low complexity" evidence="3">
    <location>
        <begin position="377"/>
        <end position="397"/>
    </location>
</feature>
<feature type="compositionally biased region" description="Pro residues" evidence="3">
    <location>
        <begin position="398"/>
        <end position="412"/>
    </location>
</feature>
<feature type="compositionally biased region" description="Low complexity" evidence="3">
    <location>
        <begin position="440"/>
        <end position="455"/>
    </location>
</feature>
<feature type="modified residue" description="Phosphotyrosine" evidence="7">
    <location>
        <position position="92"/>
    </location>
</feature>
<feature type="splice variant" id="VSP_009286" description="In isoform 2." evidence="5">
    <original>Q</original>
    <variation>QNPDACRAVCHPLPQPPASTLPLSAFPTLCDPPYSQLRDPPAVLSCYCTPLGASPAP</variation>
    <location>
        <position position="15"/>
    </location>
</feature>
<feature type="sequence variant" id="VAR_060070" description="In dbSNP:rs12689461.">
    <original>L</original>
    <variation>M</variation>
    <location>
        <position position="238"/>
    </location>
</feature>
<feature type="sequence conflict" description="In Ref. 1; AAG09704." evidence="6" ref="1">
    <original>P</original>
    <variation>S</variation>
    <location>
        <position position="119"/>
    </location>
</feature>
<dbReference type="EMBL" id="AF217963">
    <property type="protein sequence ID" value="AAG09704.1"/>
    <property type="molecule type" value="mRNA"/>
</dbReference>
<dbReference type="EMBL" id="AF258554">
    <property type="protein sequence ID" value="AAG23757.1"/>
    <property type="molecule type" value="mRNA"/>
</dbReference>
<dbReference type="EMBL" id="AF300328">
    <property type="protein sequence ID" value="AAQ14483.1"/>
    <property type="molecule type" value="mRNA"/>
</dbReference>
<dbReference type="EMBL" id="AL929410">
    <property type="status" value="NOT_ANNOTATED_CDS"/>
    <property type="molecule type" value="Genomic_DNA"/>
</dbReference>
<dbReference type="EMBL" id="BC014070">
    <property type="protein sequence ID" value="AAH14070.1"/>
    <property type="molecule type" value="mRNA"/>
</dbReference>
<dbReference type="EMBL" id="BC032473">
    <property type="protein sequence ID" value="AAH32473.1"/>
    <property type="molecule type" value="mRNA"/>
</dbReference>
<dbReference type="EMBL" id="AF124440">
    <property type="protein sequence ID" value="AAD31421.1"/>
    <property type="status" value="ALT_INIT"/>
    <property type="molecule type" value="mRNA"/>
</dbReference>
<dbReference type="EMBL" id="AL133628">
    <property type="protein sequence ID" value="CAB63752.1"/>
    <property type="molecule type" value="mRNA"/>
</dbReference>
<dbReference type="EMBL" id="AF132205">
    <property type="protein sequence ID" value="AAG35551.1"/>
    <property type="status" value="ALT_INIT"/>
    <property type="molecule type" value="mRNA"/>
</dbReference>
<dbReference type="CCDS" id="CCDS14337.1">
    <molecule id="Q9Y5V3-1"/>
</dbReference>
<dbReference type="CCDS" id="CCDS35279.1">
    <molecule id="Q9Y5V3-2"/>
</dbReference>
<dbReference type="PIR" id="T43464">
    <property type="entry name" value="T43464"/>
</dbReference>
<dbReference type="RefSeq" id="NP_001005332.1">
    <molecule id="Q9Y5V3-1"/>
    <property type="nucleotide sequence ID" value="NM_001005332.2"/>
</dbReference>
<dbReference type="RefSeq" id="NP_001005333.1">
    <molecule id="Q9Y5V3-2"/>
    <property type="nucleotide sequence ID" value="NM_001005333.2"/>
</dbReference>
<dbReference type="RefSeq" id="NP_008917.3">
    <molecule id="Q9Y5V3-1"/>
    <property type="nucleotide sequence ID" value="NM_006986.3"/>
</dbReference>
<dbReference type="RefSeq" id="XP_011529137.1">
    <molecule id="Q9Y5V3-1"/>
    <property type="nucleotide sequence ID" value="XM_011530835.3"/>
</dbReference>
<dbReference type="RefSeq" id="XP_016885467.1">
    <property type="nucleotide sequence ID" value="XM_017029978.1"/>
</dbReference>
<dbReference type="RefSeq" id="XP_016885468.1">
    <property type="nucleotide sequence ID" value="XM_017029979.1"/>
</dbReference>
<dbReference type="RefSeq" id="XP_016885469.1">
    <property type="nucleotide sequence ID" value="XM_017029980.1"/>
</dbReference>
<dbReference type="RefSeq" id="XP_047298632.1">
    <molecule id="Q9Y5V3-1"/>
    <property type="nucleotide sequence ID" value="XM_047442676.1"/>
</dbReference>
<dbReference type="RefSeq" id="XP_047298633.1">
    <molecule id="Q9Y5V3-1"/>
    <property type="nucleotide sequence ID" value="XM_047442677.1"/>
</dbReference>
<dbReference type="RefSeq" id="XP_054184153.1">
    <molecule id="Q9Y5V3-1"/>
    <property type="nucleotide sequence ID" value="XM_054328178.1"/>
</dbReference>
<dbReference type="RefSeq" id="XP_054184154.1">
    <molecule id="Q9Y5V3-1"/>
    <property type="nucleotide sequence ID" value="XM_054328179.1"/>
</dbReference>
<dbReference type="RefSeq" id="XP_054184155.1">
    <molecule id="Q9Y5V3-1"/>
    <property type="nucleotide sequence ID" value="XM_054328180.1"/>
</dbReference>
<dbReference type="SMR" id="Q9Y5V3"/>
<dbReference type="BioGRID" id="114879">
    <property type="interactions" value="321"/>
</dbReference>
<dbReference type="CORUM" id="Q9Y5V3"/>
<dbReference type="FunCoup" id="Q9Y5V3">
    <property type="interactions" value="1238"/>
</dbReference>
<dbReference type="IntAct" id="Q9Y5V3">
    <property type="interactions" value="194"/>
</dbReference>
<dbReference type="MINT" id="Q9Y5V3"/>
<dbReference type="STRING" id="9606.ENSP00000364847"/>
<dbReference type="GlyGen" id="Q9Y5V3">
    <property type="glycosylation" value="2 sites, 1 O-linked glycan (2 sites)"/>
</dbReference>
<dbReference type="iPTMnet" id="Q9Y5V3"/>
<dbReference type="PhosphoSitePlus" id="Q9Y5V3"/>
<dbReference type="BioMuta" id="MAGED1"/>
<dbReference type="DMDM" id="62906893"/>
<dbReference type="jPOST" id="Q9Y5V3"/>
<dbReference type="MassIVE" id="Q9Y5V3"/>
<dbReference type="PaxDb" id="9606-ENSP00000364847"/>
<dbReference type="PeptideAtlas" id="Q9Y5V3"/>
<dbReference type="ProteomicsDB" id="86514">
    <molecule id="Q9Y5V3-1"/>
</dbReference>
<dbReference type="ProteomicsDB" id="86515">
    <molecule id="Q9Y5V3-2"/>
</dbReference>
<dbReference type="Pumba" id="Q9Y5V3"/>
<dbReference type="Antibodypedia" id="4194">
    <property type="antibodies" value="357 antibodies from 36 providers"/>
</dbReference>
<dbReference type="DNASU" id="9500"/>
<dbReference type="Ensembl" id="ENST00000326587.12">
    <molecule id="Q9Y5V3-1"/>
    <property type="protein sequence ID" value="ENSP00000325333.8"/>
    <property type="gene ID" value="ENSG00000179222.18"/>
</dbReference>
<dbReference type="Ensembl" id="ENST00000375695.2">
    <molecule id="Q9Y5V3-2"/>
    <property type="protein sequence ID" value="ENSP00000364847.2"/>
    <property type="gene ID" value="ENSG00000179222.18"/>
</dbReference>
<dbReference type="Ensembl" id="ENST00000375722.5">
    <molecule id="Q9Y5V3-1"/>
    <property type="protein sequence ID" value="ENSP00000364874.1"/>
    <property type="gene ID" value="ENSG00000179222.18"/>
</dbReference>
<dbReference type="Ensembl" id="ENST00000375772.7">
    <molecule id="Q9Y5V3-1"/>
    <property type="protein sequence ID" value="ENSP00000364927.3"/>
    <property type="gene ID" value="ENSG00000179222.18"/>
</dbReference>
<dbReference type="GeneID" id="9500"/>
<dbReference type="KEGG" id="hsa:9500"/>
<dbReference type="MANE-Select" id="ENST00000326587.12">
    <property type="protein sequence ID" value="ENSP00000325333.8"/>
    <property type="RefSeq nucleotide sequence ID" value="NM_006986.4"/>
    <property type="RefSeq protein sequence ID" value="NP_008917.3"/>
</dbReference>
<dbReference type="UCSC" id="uc004dpm.5">
    <molecule id="Q9Y5V3-1"/>
    <property type="organism name" value="human"/>
</dbReference>
<dbReference type="AGR" id="HGNC:6813"/>
<dbReference type="CTD" id="9500"/>
<dbReference type="DisGeNET" id="9500"/>
<dbReference type="GeneCards" id="MAGED1"/>
<dbReference type="HGNC" id="HGNC:6813">
    <property type="gene designation" value="MAGED1"/>
</dbReference>
<dbReference type="HPA" id="ENSG00000179222">
    <property type="expression patterns" value="Low tissue specificity"/>
</dbReference>
<dbReference type="MalaCards" id="MAGED1"/>
<dbReference type="MIM" id="300224">
    <property type="type" value="gene"/>
</dbReference>
<dbReference type="neXtProt" id="NX_Q9Y5V3"/>
<dbReference type="OpenTargets" id="ENSG00000179222"/>
<dbReference type="PharmGKB" id="PA30559"/>
<dbReference type="VEuPathDB" id="HostDB:ENSG00000179222"/>
<dbReference type="eggNOG" id="KOG4562">
    <property type="taxonomic scope" value="Eukaryota"/>
</dbReference>
<dbReference type="GeneTree" id="ENSGT00940000162070"/>
<dbReference type="HOGENOM" id="CLU_394113_0_0_1"/>
<dbReference type="InParanoid" id="Q9Y5V3"/>
<dbReference type="OMA" id="PNPMAWQ"/>
<dbReference type="OrthoDB" id="205198at2759"/>
<dbReference type="PAN-GO" id="Q9Y5V3">
    <property type="GO annotations" value="2 GO annotations based on evolutionary models"/>
</dbReference>
<dbReference type="PhylomeDB" id="Q9Y5V3"/>
<dbReference type="TreeFam" id="TF352132"/>
<dbReference type="PathwayCommons" id="Q9Y5V3"/>
<dbReference type="Reactome" id="R-HSA-193648">
    <property type="pathway name" value="NRAGE signals death through JNK"/>
</dbReference>
<dbReference type="Reactome" id="R-HSA-418889">
    <property type="pathway name" value="Caspase activation via Dependence Receptors in the absence of ligand"/>
</dbReference>
<dbReference type="Reactome" id="R-HSA-9768919">
    <property type="pathway name" value="NPAS4 regulates expression of target genes"/>
</dbReference>
<dbReference type="SignaLink" id="Q9Y5V3"/>
<dbReference type="SIGNOR" id="Q9Y5V3"/>
<dbReference type="BioGRID-ORCS" id="9500">
    <property type="hits" value="9 hits in 775 CRISPR screens"/>
</dbReference>
<dbReference type="CD-CODE" id="232F8A39">
    <property type="entry name" value="P-body"/>
</dbReference>
<dbReference type="CD-CODE" id="DEE660B4">
    <property type="entry name" value="Stress granule"/>
</dbReference>
<dbReference type="ChiTaRS" id="MAGED1">
    <property type="organism name" value="human"/>
</dbReference>
<dbReference type="GeneWiki" id="MAGED1"/>
<dbReference type="GenomeRNAi" id="9500"/>
<dbReference type="Pharos" id="Q9Y5V3">
    <property type="development level" value="Tbio"/>
</dbReference>
<dbReference type="PRO" id="PR:Q9Y5V3"/>
<dbReference type="Proteomes" id="UP000005640">
    <property type="component" value="Chromosome X"/>
</dbReference>
<dbReference type="RNAct" id="Q9Y5V3">
    <property type="molecule type" value="protein"/>
</dbReference>
<dbReference type="Bgee" id="ENSG00000179222">
    <property type="expression patterns" value="Expressed in ventricular zone and 202 other cell types or tissues"/>
</dbReference>
<dbReference type="GO" id="GO:0000785">
    <property type="term" value="C:chromatin"/>
    <property type="evidence" value="ECO:0000250"/>
    <property type="project" value="UniProtKB"/>
</dbReference>
<dbReference type="GO" id="GO:0005829">
    <property type="term" value="C:cytosol"/>
    <property type="evidence" value="ECO:0000304"/>
    <property type="project" value="Reactome"/>
</dbReference>
<dbReference type="GO" id="GO:0005634">
    <property type="term" value="C:nucleus"/>
    <property type="evidence" value="ECO:0000250"/>
    <property type="project" value="UniProtKB"/>
</dbReference>
<dbReference type="GO" id="GO:0005886">
    <property type="term" value="C:plasma membrane"/>
    <property type="evidence" value="ECO:0007669"/>
    <property type="project" value="UniProtKB-SubCell"/>
</dbReference>
<dbReference type="GO" id="GO:0032991">
    <property type="term" value="C:protein-containing complex"/>
    <property type="evidence" value="ECO:0000314"/>
    <property type="project" value="UniProtKB"/>
</dbReference>
<dbReference type="GO" id="GO:0042802">
    <property type="term" value="F:identical protein binding"/>
    <property type="evidence" value="ECO:0000353"/>
    <property type="project" value="IntAct"/>
</dbReference>
<dbReference type="GO" id="GO:0003713">
    <property type="term" value="F:transcription coactivator activity"/>
    <property type="evidence" value="ECO:0007669"/>
    <property type="project" value="Ensembl"/>
</dbReference>
<dbReference type="GO" id="GO:0032922">
    <property type="term" value="P:circadian regulation of gene expression"/>
    <property type="evidence" value="ECO:0000250"/>
    <property type="project" value="UniProtKB"/>
</dbReference>
<dbReference type="GO" id="GO:0050680">
    <property type="term" value="P:negative regulation of epithelial cell proliferation"/>
    <property type="evidence" value="ECO:0000314"/>
    <property type="project" value="UniProtKB"/>
</dbReference>
<dbReference type="GO" id="GO:1900181">
    <property type="term" value="P:negative regulation of protein localization to nucleus"/>
    <property type="evidence" value="ECO:0007669"/>
    <property type="project" value="Ensembl"/>
</dbReference>
<dbReference type="GO" id="GO:0000122">
    <property type="term" value="P:negative regulation of transcription by RNA polymerase II"/>
    <property type="evidence" value="ECO:0000318"/>
    <property type="project" value="GO_Central"/>
</dbReference>
<dbReference type="GO" id="GO:2001235">
    <property type="term" value="P:positive regulation of apoptotic signaling pathway"/>
    <property type="evidence" value="ECO:0007669"/>
    <property type="project" value="Ensembl"/>
</dbReference>
<dbReference type="GO" id="GO:0090190">
    <property type="term" value="P:positive regulation of branching involved in ureteric bud morphogenesis"/>
    <property type="evidence" value="ECO:0007669"/>
    <property type="project" value="Ensembl"/>
</dbReference>
<dbReference type="GO" id="GO:0034504">
    <property type="term" value="P:protein localization to nucleus"/>
    <property type="evidence" value="ECO:0007669"/>
    <property type="project" value="Ensembl"/>
</dbReference>
<dbReference type="GO" id="GO:0042981">
    <property type="term" value="P:regulation of apoptotic process"/>
    <property type="evidence" value="ECO:0000304"/>
    <property type="project" value="UniProtKB"/>
</dbReference>
<dbReference type="GO" id="GO:0042752">
    <property type="term" value="P:regulation of circadian rhythm"/>
    <property type="evidence" value="ECO:0007669"/>
    <property type="project" value="Ensembl"/>
</dbReference>
<dbReference type="GO" id="GO:0006355">
    <property type="term" value="P:regulation of DNA-templated transcription"/>
    <property type="evidence" value="ECO:0000304"/>
    <property type="project" value="UniProtKB"/>
</dbReference>
<dbReference type="FunFam" id="1.10.10.1200:FF:000001">
    <property type="entry name" value="Melanoma-associated antigen D1"/>
    <property type="match status" value="1"/>
</dbReference>
<dbReference type="FunFam" id="1.10.10.1210:FF:000001">
    <property type="entry name" value="melanoma-associated antigen D1"/>
    <property type="match status" value="1"/>
</dbReference>
<dbReference type="Gene3D" id="1.10.10.1200">
    <property type="entry name" value="MAGE homology domain, winged helix WH1 motif"/>
    <property type="match status" value="1"/>
</dbReference>
<dbReference type="Gene3D" id="1.10.10.1210">
    <property type="entry name" value="MAGE homology domain, winged helix WH2 motif"/>
    <property type="match status" value="1"/>
</dbReference>
<dbReference type="InterPro" id="IPR037445">
    <property type="entry name" value="MAGE"/>
</dbReference>
<dbReference type="InterPro" id="IPR041898">
    <property type="entry name" value="MAGE_WH1"/>
</dbReference>
<dbReference type="InterPro" id="IPR041899">
    <property type="entry name" value="MAGE_WH2"/>
</dbReference>
<dbReference type="InterPro" id="IPR002190">
    <property type="entry name" value="MHD_dom"/>
</dbReference>
<dbReference type="PANTHER" id="PTHR11736:SF28">
    <property type="entry name" value="MELANOMA-ASSOCIATED ANTIGEN D1"/>
    <property type="match status" value="1"/>
</dbReference>
<dbReference type="PANTHER" id="PTHR11736">
    <property type="entry name" value="MELANOMA-ASSOCIATED ANTIGEN MAGE ANTIGEN"/>
    <property type="match status" value="1"/>
</dbReference>
<dbReference type="Pfam" id="PF01454">
    <property type="entry name" value="MAGE"/>
    <property type="match status" value="1"/>
</dbReference>
<dbReference type="SMART" id="SM01373">
    <property type="entry name" value="MAGE"/>
    <property type="match status" value="1"/>
</dbReference>
<dbReference type="PROSITE" id="PS50838">
    <property type="entry name" value="MAGE"/>
    <property type="match status" value="1"/>
</dbReference>
<organism>
    <name type="scientific">Homo sapiens</name>
    <name type="common">Human</name>
    <dbReference type="NCBI Taxonomy" id="9606"/>
    <lineage>
        <taxon>Eukaryota</taxon>
        <taxon>Metazoa</taxon>
        <taxon>Chordata</taxon>
        <taxon>Craniata</taxon>
        <taxon>Vertebrata</taxon>
        <taxon>Euteleostomi</taxon>
        <taxon>Mammalia</taxon>
        <taxon>Eutheria</taxon>
        <taxon>Euarchontoglires</taxon>
        <taxon>Primates</taxon>
        <taxon>Haplorrhini</taxon>
        <taxon>Catarrhini</taxon>
        <taxon>Hominidae</taxon>
        <taxon>Homo</taxon>
    </lineage>
</organism>